<name>U496O_ARATH</name>
<accession>Q9M1J0</accession>
<gene>
    <name type="ordered locus">At3g57100</name>
    <name type="ORF">F24I3.180</name>
</gene>
<evidence type="ECO:0000255" key="1"/>
<evidence type="ECO:0000305" key="2"/>
<comment type="subcellular location">
    <subcellularLocation>
        <location evidence="2">Membrane</location>
        <topology evidence="2">Single-pass membrane protein</topology>
    </subcellularLocation>
</comment>
<comment type="similarity">
    <text evidence="2">Belongs to the UPF0496 family.</text>
</comment>
<feature type="chain" id="PRO_0000306900" description="UPF0496 protein At3g57100">
    <location>
        <begin position="1"/>
        <end position="359"/>
    </location>
</feature>
<feature type="transmembrane region" description="Helical" evidence="1">
    <location>
        <begin position="214"/>
        <end position="234"/>
    </location>
</feature>
<feature type="coiled-coil region" evidence="1">
    <location>
        <begin position="179"/>
        <end position="208"/>
    </location>
</feature>
<keyword id="KW-0175">Coiled coil</keyword>
<keyword id="KW-0472">Membrane</keyword>
<keyword id="KW-1185">Reference proteome</keyword>
<keyword id="KW-0812">Transmembrane</keyword>
<keyword id="KW-1133">Transmembrane helix</keyword>
<sequence>MKFCNPFLRLILRRKPISMISPTMFLLSSPTTSSSIGHSNGMLRSRSEDNLNKLGECMDNMDEDVSKLFIEFQQTDLREDPDLFRLLNHYFTTSKGVSQLCESLRTCLERSENNECLLLDEALVDFELEKLGYGGSLEEASFRKTYRDLRNFNAFYNNNSGEEDDLDYCEFLRKFQTCHEELAKMVVKLEKTMKDIDKKLRRVRGRRAIVTAALLAPVIAVIFLSKLVAGLVPIEGLSTFVASRWRKSTESLKREKTAMSSMERGIIVALKQVEKISKLVSRLESVERSISLTAEFAVKKRSSVVVAMREVEEERKRLKSTLVDLDRETGLCNGFAQFGRTVALEKITEFLSRGDKSSK</sequence>
<proteinExistence type="evidence at transcript level"/>
<organism>
    <name type="scientific">Arabidopsis thaliana</name>
    <name type="common">Mouse-ear cress</name>
    <dbReference type="NCBI Taxonomy" id="3702"/>
    <lineage>
        <taxon>Eukaryota</taxon>
        <taxon>Viridiplantae</taxon>
        <taxon>Streptophyta</taxon>
        <taxon>Embryophyta</taxon>
        <taxon>Tracheophyta</taxon>
        <taxon>Spermatophyta</taxon>
        <taxon>Magnoliopsida</taxon>
        <taxon>eudicotyledons</taxon>
        <taxon>Gunneridae</taxon>
        <taxon>Pentapetalae</taxon>
        <taxon>rosids</taxon>
        <taxon>malvids</taxon>
        <taxon>Brassicales</taxon>
        <taxon>Brassicaceae</taxon>
        <taxon>Camelineae</taxon>
        <taxon>Arabidopsis</taxon>
    </lineage>
</organism>
<reference key="1">
    <citation type="journal article" date="2000" name="Nature">
        <title>Sequence and analysis of chromosome 3 of the plant Arabidopsis thaliana.</title>
        <authorList>
            <person name="Salanoubat M."/>
            <person name="Lemcke K."/>
            <person name="Rieger M."/>
            <person name="Ansorge W."/>
            <person name="Unseld M."/>
            <person name="Fartmann B."/>
            <person name="Valle G."/>
            <person name="Bloecker H."/>
            <person name="Perez-Alonso M."/>
            <person name="Obermaier B."/>
            <person name="Delseny M."/>
            <person name="Boutry M."/>
            <person name="Grivell L.A."/>
            <person name="Mache R."/>
            <person name="Puigdomenech P."/>
            <person name="De Simone V."/>
            <person name="Choisne N."/>
            <person name="Artiguenave F."/>
            <person name="Robert C."/>
            <person name="Brottier P."/>
            <person name="Wincker P."/>
            <person name="Cattolico L."/>
            <person name="Weissenbach J."/>
            <person name="Saurin W."/>
            <person name="Quetier F."/>
            <person name="Schaefer M."/>
            <person name="Mueller-Auer S."/>
            <person name="Gabel C."/>
            <person name="Fuchs M."/>
            <person name="Benes V."/>
            <person name="Wurmbach E."/>
            <person name="Drzonek H."/>
            <person name="Erfle H."/>
            <person name="Jordan N."/>
            <person name="Bangert S."/>
            <person name="Wiedelmann R."/>
            <person name="Kranz H."/>
            <person name="Voss H."/>
            <person name="Holland R."/>
            <person name="Brandt P."/>
            <person name="Nyakatura G."/>
            <person name="Vezzi A."/>
            <person name="D'Angelo M."/>
            <person name="Pallavicini A."/>
            <person name="Toppo S."/>
            <person name="Simionati B."/>
            <person name="Conrad A."/>
            <person name="Hornischer K."/>
            <person name="Kauer G."/>
            <person name="Loehnert T.-H."/>
            <person name="Nordsiek G."/>
            <person name="Reichelt J."/>
            <person name="Scharfe M."/>
            <person name="Schoen O."/>
            <person name="Bargues M."/>
            <person name="Terol J."/>
            <person name="Climent J."/>
            <person name="Navarro P."/>
            <person name="Collado C."/>
            <person name="Perez-Perez A."/>
            <person name="Ottenwaelder B."/>
            <person name="Duchemin D."/>
            <person name="Cooke R."/>
            <person name="Laudie M."/>
            <person name="Berger-Llauro C."/>
            <person name="Purnelle B."/>
            <person name="Masuy D."/>
            <person name="de Haan M."/>
            <person name="Maarse A.C."/>
            <person name="Alcaraz J.-P."/>
            <person name="Cottet A."/>
            <person name="Casacuberta E."/>
            <person name="Monfort A."/>
            <person name="Argiriou A."/>
            <person name="Flores M."/>
            <person name="Liguori R."/>
            <person name="Vitale D."/>
            <person name="Mannhaupt G."/>
            <person name="Haase D."/>
            <person name="Schoof H."/>
            <person name="Rudd S."/>
            <person name="Zaccaria P."/>
            <person name="Mewes H.-W."/>
            <person name="Mayer K.F.X."/>
            <person name="Kaul S."/>
            <person name="Town C.D."/>
            <person name="Koo H.L."/>
            <person name="Tallon L.J."/>
            <person name="Jenkins J."/>
            <person name="Rooney T."/>
            <person name="Rizzo M."/>
            <person name="Walts A."/>
            <person name="Utterback T."/>
            <person name="Fujii C.Y."/>
            <person name="Shea T.P."/>
            <person name="Creasy T.H."/>
            <person name="Haas B."/>
            <person name="Maiti R."/>
            <person name="Wu D."/>
            <person name="Peterson J."/>
            <person name="Van Aken S."/>
            <person name="Pai G."/>
            <person name="Militscher J."/>
            <person name="Sellers P."/>
            <person name="Gill J.E."/>
            <person name="Feldblyum T.V."/>
            <person name="Preuss D."/>
            <person name="Lin X."/>
            <person name="Nierman W.C."/>
            <person name="Salzberg S.L."/>
            <person name="White O."/>
            <person name="Venter J.C."/>
            <person name="Fraser C.M."/>
            <person name="Kaneko T."/>
            <person name="Nakamura Y."/>
            <person name="Sato S."/>
            <person name="Kato T."/>
            <person name="Asamizu E."/>
            <person name="Sasamoto S."/>
            <person name="Kimura T."/>
            <person name="Idesawa K."/>
            <person name="Kawashima K."/>
            <person name="Kishida Y."/>
            <person name="Kiyokawa C."/>
            <person name="Kohara M."/>
            <person name="Matsumoto M."/>
            <person name="Matsuno A."/>
            <person name="Muraki A."/>
            <person name="Nakayama S."/>
            <person name="Nakazaki N."/>
            <person name="Shinpo S."/>
            <person name="Takeuchi C."/>
            <person name="Wada T."/>
            <person name="Watanabe A."/>
            <person name="Yamada M."/>
            <person name="Yasuda M."/>
            <person name="Tabata S."/>
        </authorList>
    </citation>
    <scope>NUCLEOTIDE SEQUENCE [LARGE SCALE GENOMIC DNA]</scope>
    <source>
        <strain>cv. Columbia</strain>
    </source>
</reference>
<reference key="2">
    <citation type="journal article" date="2017" name="Plant J.">
        <title>Araport11: a complete reannotation of the Arabidopsis thaliana reference genome.</title>
        <authorList>
            <person name="Cheng C.Y."/>
            <person name="Krishnakumar V."/>
            <person name="Chan A.P."/>
            <person name="Thibaud-Nissen F."/>
            <person name="Schobel S."/>
            <person name="Town C.D."/>
        </authorList>
    </citation>
    <scope>GENOME REANNOTATION</scope>
    <source>
        <strain>cv. Columbia</strain>
    </source>
</reference>
<reference key="3">
    <citation type="submission" date="2005-02" db="EMBL/GenBank/DDBJ databases">
        <authorList>
            <person name="Underwood B.A."/>
            <person name="Xiao Y.-L."/>
            <person name="Moskal W.A. Jr."/>
            <person name="Monaghan E.L."/>
            <person name="Wang W."/>
            <person name="Redman J.C."/>
            <person name="Wu H.C."/>
            <person name="Utterback T."/>
            <person name="Town C.D."/>
        </authorList>
    </citation>
    <scope>NUCLEOTIDE SEQUENCE [LARGE SCALE GENOMIC DNA / MRNA]</scope>
    <source>
        <strain>cv. Columbia</strain>
    </source>
</reference>
<protein>
    <recommendedName>
        <fullName>UPF0496 protein At3g57100</fullName>
    </recommendedName>
</protein>
<dbReference type="EMBL" id="AL138655">
    <property type="protein sequence ID" value="CAB72180.1"/>
    <property type="molecule type" value="Genomic_DNA"/>
</dbReference>
<dbReference type="EMBL" id="CP002686">
    <property type="protein sequence ID" value="AEE79614.1"/>
    <property type="molecule type" value="Genomic_DNA"/>
</dbReference>
<dbReference type="EMBL" id="AY735622">
    <property type="protein sequence ID" value="AAU44492.1"/>
    <property type="molecule type" value="mRNA"/>
</dbReference>
<dbReference type="EMBL" id="AY924796">
    <property type="protein sequence ID" value="AAX23871.1"/>
    <property type="molecule type" value="Genomic_DNA"/>
</dbReference>
<dbReference type="PIR" id="T47770">
    <property type="entry name" value="T47770"/>
</dbReference>
<dbReference type="RefSeq" id="NP_191269.1">
    <property type="nucleotide sequence ID" value="NM_115569.2"/>
</dbReference>
<dbReference type="SMR" id="Q9M1J0"/>
<dbReference type="STRING" id="3702.Q9M1J0"/>
<dbReference type="PaxDb" id="3702-AT3G57100.1"/>
<dbReference type="EnsemblPlants" id="AT3G57100.1">
    <property type="protein sequence ID" value="AT3G57100.1"/>
    <property type="gene ID" value="AT3G57100"/>
</dbReference>
<dbReference type="GeneID" id="824877"/>
<dbReference type="Gramene" id="AT3G57100.1">
    <property type="protein sequence ID" value="AT3G57100.1"/>
    <property type="gene ID" value="AT3G57100"/>
</dbReference>
<dbReference type="KEGG" id="ath:AT3G57100"/>
<dbReference type="Araport" id="AT3G57100"/>
<dbReference type="TAIR" id="AT3G57100"/>
<dbReference type="eggNOG" id="ENOG502QQBT">
    <property type="taxonomic scope" value="Eukaryota"/>
</dbReference>
<dbReference type="HOGENOM" id="CLU_047064_0_0_1"/>
<dbReference type="InParanoid" id="Q9M1J0"/>
<dbReference type="OMA" id="TCHEELA"/>
<dbReference type="PhylomeDB" id="Q9M1J0"/>
<dbReference type="PRO" id="PR:Q9M1J0"/>
<dbReference type="Proteomes" id="UP000006548">
    <property type="component" value="Chromosome 3"/>
</dbReference>
<dbReference type="ExpressionAtlas" id="Q9M1J0">
    <property type="expression patterns" value="baseline and differential"/>
</dbReference>
<dbReference type="GO" id="GO:0016020">
    <property type="term" value="C:membrane"/>
    <property type="evidence" value="ECO:0007669"/>
    <property type="project" value="UniProtKB-SubCell"/>
</dbReference>
<dbReference type="InterPro" id="IPR007749">
    <property type="entry name" value="DUF677"/>
</dbReference>
<dbReference type="PANTHER" id="PTHR31113:SF19">
    <property type="match status" value="1"/>
</dbReference>
<dbReference type="PANTHER" id="PTHR31113">
    <property type="entry name" value="UPF0496 PROTEIN 3-RELATED"/>
    <property type="match status" value="1"/>
</dbReference>
<dbReference type="Pfam" id="PF05055">
    <property type="entry name" value="DUF677"/>
    <property type="match status" value="1"/>
</dbReference>